<reference key="1">
    <citation type="submission" date="2007-11" db="EMBL/GenBank/DDBJ databases">
        <title>Complete sequence of chromosome of Shewanella baltica OS195.</title>
        <authorList>
            <consortium name="US DOE Joint Genome Institute"/>
            <person name="Copeland A."/>
            <person name="Lucas S."/>
            <person name="Lapidus A."/>
            <person name="Barry K."/>
            <person name="Glavina del Rio T."/>
            <person name="Dalin E."/>
            <person name="Tice H."/>
            <person name="Pitluck S."/>
            <person name="Chain P."/>
            <person name="Malfatti S."/>
            <person name="Shin M."/>
            <person name="Vergez L."/>
            <person name="Schmutz J."/>
            <person name="Larimer F."/>
            <person name="Land M."/>
            <person name="Hauser L."/>
            <person name="Kyrpides N."/>
            <person name="Kim E."/>
            <person name="Brettar I."/>
            <person name="Rodrigues J."/>
            <person name="Konstantinidis K."/>
            <person name="Klappenbach J."/>
            <person name="Hofle M."/>
            <person name="Tiedje J."/>
            <person name="Richardson P."/>
        </authorList>
    </citation>
    <scope>NUCLEOTIDE SEQUENCE [LARGE SCALE GENOMIC DNA]</scope>
    <source>
        <strain>OS195</strain>
    </source>
</reference>
<keyword id="KW-0808">Transferase</keyword>
<keyword id="KW-0819">tRNA processing</keyword>
<proteinExistence type="inferred from homology"/>
<feature type="chain" id="PRO_1000087972" description="tRNA U34 carboxymethyltransferase">
    <location>
        <begin position="1"/>
        <end position="331"/>
    </location>
</feature>
<feature type="binding site" evidence="1">
    <location>
        <position position="91"/>
    </location>
    <ligand>
        <name>carboxy-S-adenosyl-L-methionine</name>
        <dbReference type="ChEBI" id="CHEBI:134278"/>
    </ligand>
</feature>
<feature type="binding site" evidence="1">
    <location>
        <position position="105"/>
    </location>
    <ligand>
        <name>carboxy-S-adenosyl-L-methionine</name>
        <dbReference type="ChEBI" id="CHEBI:134278"/>
    </ligand>
</feature>
<feature type="binding site" evidence="1">
    <location>
        <position position="110"/>
    </location>
    <ligand>
        <name>carboxy-S-adenosyl-L-methionine</name>
        <dbReference type="ChEBI" id="CHEBI:134278"/>
    </ligand>
</feature>
<feature type="binding site" evidence="1">
    <location>
        <position position="130"/>
    </location>
    <ligand>
        <name>carboxy-S-adenosyl-L-methionine</name>
        <dbReference type="ChEBI" id="CHEBI:134278"/>
    </ligand>
</feature>
<feature type="binding site" evidence="1">
    <location>
        <begin position="152"/>
        <end position="154"/>
    </location>
    <ligand>
        <name>carboxy-S-adenosyl-L-methionine</name>
        <dbReference type="ChEBI" id="CHEBI:134278"/>
    </ligand>
</feature>
<feature type="binding site" evidence="1">
    <location>
        <begin position="181"/>
        <end position="182"/>
    </location>
    <ligand>
        <name>carboxy-S-adenosyl-L-methionine</name>
        <dbReference type="ChEBI" id="CHEBI:134278"/>
    </ligand>
</feature>
<feature type="binding site" evidence="1">
    <location>
        <position position="196"/>
    </location>
    <ligand>
        <name>carboxy-S-adenosyl-L-methionine</name>
        <dbReference type="ChEBI" id="CHEBI:134278"/>
    </ligand>
</feature>
<feature type="binding site" evidence="1">
    <location>
        <position position="200"/>
    </location>
    <ligand>
        <name>carboxy-S-adenosyl-L-methionine</name>
        <dbReference type="ChEBI" id="CHEBI:134278"/>
    </ligand>
</feature>
<feature type="binding site" evidence="1">
    <location>
        <position position="315"/>
    </location>
    <ligand>
        <name>carboxy-S-adenosyl-L-methionine</name>
        <dbReference type="ChEBI" id="CHEBI:134278"/>
    </ligand>
</feature>
<accession>A9L3I4</accession>
<name>CMOB_SHEB9</name>
<evidence type="ECO:0000255" key="1">
    <source>
        <dbReference type="HAMAP-Rule" id="MF_01590"/>
    </source>
</evidence>
<sequence>MISFSSFYQQIADSNLQHWLETLPSILGKWQRDHKHGNLPKWEKVLNKLHYPAPDQVDFVDSVTVGSGEQLSPGEKEKLENLLRLFMPWRKGPFHIHGIHIDTEWRSDWKWDRVKQHISPLKNRTVLDVGCGSGYHMWRMLGSGAKRVVGIDPSPLFLCQFEAVKRLAGTHHPVHLLPLGIEELPPLDAFDTVFSMGVLYHRRSPIDHLLQLRDQLRTGGELVLETLVIDGDENAVLVPQDRYGKMNNVWFIPSVAALMLWLKKCDFTDIRCVDTDVTALAEQRRTDWMPNESLVEYLDPNDITKTVEGYPAPKRATIIAVKNQPNQDLIS</sequence>
<gene>
    <name evidence="1" type="primary">cmoB</name>
    <name type="ordered locus">Sbal195_2426</name>
</gene>
<comment type="function">
    <text evidence="1">Catalyzes carboxymethyl transfer from carboxy-S-adenosyl-L-methionine (Cx-SAM) to 5-hydroxyuridine (ho5U) to form 5-carboxymethoxyuridine (cmo5U) at position 34 in tRNAs.</text>
</comment>
<comment type="catalytic activity">
    <reaction evidence="1">
        <text>carboxy-S-adenosyl-L-methionine + 5-hydroxyuridine(34) in tRNA = 5-carboxymethoxyuridine(34) in tRNA + S-adenosyl-L-homocysteine + H(+)</text>
        <dbReference type="Rhea" id="RHEA:52848"/>
        <dbReference type="Rhea" id="RHEA-COMP:13381"/>
        <dbReference type="Rhea" id="RHEA-COMP:13383"/>
        <dbReference type="ChEBI" id="CHEBI:15378"/>
        <dbReference type="ChEBI" id="CHEBI:57856"/>
        <dbReference type="ChEBI" id="CHEBI:134278"/>
        <dbReference type="ChEBI" id="CHEBI:136877"/>
        <dbReference type="ChEBI" id="CHEBI:136879"/>
    </reaction>
</comment>
<comment type="subunit">
    <text evidence="1">Homotetramer.</text>
</comment>
<comment type="similarity">
    <text evidence="1">Belongs to the class I-like SAM-binding methyltransferase superfamily. CmoB family.</text>
</comment>
<organism>
    <name type="scientific">Shewanella baltica (strain OS195)</name>
    <dbReference type="NCBI Taxonomy" id="399599"/>
    <lineage>
        <taxon>Bacteria</taxon>
        <taxon>Pseudomonadati</taxon>
        <taxon>Pseudomonadota</taxon>
        <taxon>Gammaproteobacteria</taxon>
        <taxon>Alteromonadales</taxon>
        <taxon>Shewanellaceae</taxon>
        <taxon>Shewanella</taxon>
    </lineage>
</organism>
<protein>
    <recommendedName>
        <fullName evidence="1">tRNA U34 carboxymethyltransferase</fullName>
        <ecNumber evidence="1">2.5.1.-</ecNumber>
    </recommendedName>
</protein>
<dbReference type="EC" id="2.5.1.-" evidence="1"/>
<dbReference type="EMBL" id="CP000891">
    <property type="protein sequence ID" value="ABX49594.1"/>
    <property type="molecule type" value="Genomic_DNA"/>
</dbReference>
<dbReference type="RefSeq" id="WP_006086784.1">
    <property type="nucleotide sequence ID" value="NC_009997.1"/>
</dbReference>
<dbReference type="SMR" id="A9L3I4"/>
<dbReference type="GeneID" id="11772543"/>
<dbReference type="KEGG" id="sbn:Sbal195_2426"/>
<dbReference type="HOGENOM" id="CLU_052665_0_0_6"/>
<dbReference type="Proteomes" id="UP000000770">
    <property type="component" value="Chromosome"/>
</dbReference>
<dbReference type="GO" id="GO:0008168">
    <property type="term" value="F:methyltransferase activity"/>
    <property type="evidence" value="ECO:0007669"/>
    <property type="project" value="TreeGrafter"/>
</dbReference>
<dbReference type="GO" id="GO:0016765">
    <property type="term" value="F:transferase activity, transferring alkyl or aryl (other than methyl) groups"/>
    <property type="evidence" value="ECO:0007669"/>
    <property type="project" value="UniProtKB-UniRule"/>
</dbReference>
<dbReference type="GO" id="GO:0002098">
    <property type="term" value="P:tRNA wobble uridine modification"/>
    <property type="evidence" value="ECO:0007669"/>
    <property type="project" value="InterPro"/>
</dbReference>
<dbReference type="CDD" id="cd02440">
    <property type="entry name" value="AdoMet_MTases"/>
    <property type="match status" value="1"/>
</dbReference>
<dbReference type="Gene3D" id="3.40.50.150">
    <property type="entry name" value="Vaccinia Virus protein VP39"/>
    <property type="match status" value="1"/>
</dbReference>
<dbReference type="HAMAP" id="MF_01590">
    <property type="entry name" value="tRNA_carboxymethyltr_CmoB"/>
    <property type="match status" value="1"/>
</dbReference>
<dbReference type="InterPro" id="IPR010017">
    <property type="entry name" value="CmoB"/>
</dbReference>
<dbReference type="InterPro" id="IPR027555">
    <property type="entry name" value="Mo5U34_MeTrfas-like"/>
</dbReference>
<dbReference type="InterPro" id="IPR029063">
    <property type="entry name" value="SAM-dependent_MTases_sf"/>
</dbReference>
<dbReference type="NCBIfam" id="NF011650">
    <property type="entry name" value="PRK15068.1"/>
    <property type="match status" value="1"/>
</dbReference>
<dbReference type="NCBIfam" id="TIGR00452">
    <property type="entry name" value="tRNA 5-methoxyuridine(34)/uridine 5-oxyacetic acid(34) synthase CmoB"/>
    <property type="match status" value="1"/>
</dbReference>
<dbReference type="PANTHER" id="PTHR43464">
    <property type="entry name" value="METHYLTRANSFERASE"/>
    <property type="match status" value="1"/>
</dbReference>
<dbReference type="PANTHER" id="PTHR43464:SF95">
    <property type="entry name" value="TRNA U34 CARBOXYMETHYLTRANSFERASE"/>
    <property type="match status" value="1"/>
</dbReference>
<dbReference type="Pfam" id="PF08003">
    <property type="entry name" value="Methyltransf_9"/>
    <property type="match status" value="1"/>
</dbReference>
<dbReference type="SUPFAM" id="SSF53335">
    <property type="entry name" value="S-adenosyl-L-methionine-dependent methyltransferases"/>
    <property type="match status" value="1"/>
</dbReference>